<feature type="chain" id="PRO_0000203066" description="Putative lipoate-protein ligase A">
    <location>
        <begin position="1"/>
        <end position="409"/>
    </location>
</feature>
<feature type="domain" description="BPL/LPL catalytic" evidence="2">
    <location>
        <begin position="146"/>
        <end position="330"/>
    </location>
</feature>
<feature type="binding site" evidence="1">
    <location>
        <position position="188"/>
    </location>
    <ligand>
        <name>ATP</name>
        <dbReference type="ChEBI" id="CHEBI:30616"/>
    </ligand>
</feature>
<feature type="binding site" evidence="1">
    <location>
        <begin position="193"/>
        <end position="196"/>
    </location>
    <ligand>
        <name>ATP</name>
        <dbReference type="ChEBI" id="CHEBI:30616"/>
    </ligand>
</feature>
<feature type="binding site" evidence="1">
    <location>
        <position position="249"/>
    </location>
    <ligand>
        <name>(R)-lipoate</name>
        <dbReference type="ChEBI" id="CHEBI:83088"/>
    </ligand>
</feature>
<feature type="binding site" evidence="1">
    <location>
        <position position="249"/>
    </location>
    <ligand>
        <name>ATP</name>
        <dbReference type="ChEBI" id="CHEBI:30616"/>
    </ligand>
</feature>
<evidence type="ECO:0000250" key="1"/>
<evidence type="ECO:0000255" key="2">
    <source>
        <dbReference type="PROSITE-ProRule" id="PRU01067"/>
    </source>
</evidence>
<evidence type="ECO:0000305" key="3"/>
<proteinExistence type="inferred from homology"/>
<gene>
    <name type="primary">AIM22</name>
    <name type="ordered locus">YJL046W</name>
    <name type="ORF">J1171</name>
</gene>
<reference key="1">
    <citation type="journal article" date="1996" name="EMBO J.">
        <title>Complete nucleotide sequence of Saccharomyces cerevisiae chromosome X.</title>
        <authorList>
            <person name="Galibert F."/>
            <person name="Alexandraki D."/>
            <person name="Baur A."/>
            <person name="Boles E."/>
            <person name="Chalwatzis N."/>
            <person name="Chuat J.-C."/>
            <person name="Coster F."/>
            <person name="Cziepluch C."/>
            <person name="de Haan M."/>
            <person name="Domdey H."/>
            <person name="Durand P."/>
            <person name="Entian K.-D."/>
            <person name="Gatius M."/>
            <person name="Goffeau A."/>
            <person name="Grivell L.A."/>
            <person name="Hennemann A."/>
            <person name="Herbert C.J."/>
            <person name="Heumann K."/>
            <person name="Hilger F."/>
            <person name="Hollenberg C.P."/>
            <person name="Huang M.-E."/>
            <person name="Jacq C."/>
            <person name="Jauniaux J.-C."/>
            <person name="Katsoulou C."/>
            <person name="Kirchrath L."/>
            <person name="Kleine K."/>
            <person name="Kordes E."/>
            <person name="Koetter P."/>
            <person name="Liebl S."/>
            <person name="Louis E.J."/>
            <person name="Manus V."/>
            <person name="Mewes H.-W."/>
            <person name="Miosga T."/>
            <person name="Obermaier B."/>
            <person name="Perea J."/>
            <person name="Pohl T.M."/>
            <person name="Portetelle D."/>
            <person name="Pujol A."/>
            <person name="Purnelle B."/>
            <person name="Ramezani Rad M."/>
            <person name="Rasmussen S.W."/>
            <person name="Rose M."/>
            <person name="Rossau R."/>
            <person name="Schaaff-Gerstenschlaeger I."/>
            <person name="Smits P.H.M."/>
            <person name="Scarcez T."/>
            <person name="Soriano N."/>
            <person name="To Van D."/>
            <person name="Tzermia M."/>
            <person name="Van Broekhoven A."/>
            <person name="Vandenbol M."/>
            <person name="Wedler H."/>
            <person name="von Wettstein D."/>
            <person name="Wambutt R."/>
            <person name="Zagulski M."/>
            <person name="Zollner A."/>
            <person name="Karpfinger-Hartl L."/>
        </authorList>
    </citation>
    <scope>NUCLEOTIDE SEQUENCE [LARGE SCALE GENOMIC DNA]</scope>
    <source>
        <strain>ATCC 204508 / S288c</strain>
    </source>
</reference>
<reference key="2">
    <citation type="journal article" date="2014" name="G3 (Bethesda)">
        <title>The reference genome sequence of Saccharomyces cerevisiae: Then and now.</title>
        <authorList>
            <person name="Engel S.R."/>
            <person name="Dietrich F.S."/>
            <person name="Fisk D.G."/>
            <person name="Binkley G."/>
            <person name="Balakrishnan R."/>
            <person name="Costanzo M.C."/>
            <person name="Dwight S.S."/>
            <person name="Hitz B.C."/>
            <person name="Karra K."/>
            <person name="Nash R.S."/>
            <person name="Weng S."/>
            <person name="Wong E.D."/>
            <person name="Lloyd P."/>
            <person name="Skrzypek M.S."/>
            <person name="Miyasato S.R."/>
            <person name="Simison M."/>
            <person name="Cherry J.M."/>
        </authorList>
    </citation>
    <scope>GENOME REANNOTATION</scope>
    <source>
        <strain>ATCC 204508 / S288c</strain>
    </source>
</reference>
<reference key="3">
    <citation type="journal article" date="2007" name="Genome Res.">
        <title>Approaching a complete repository of sequence-verified protein-encoding clones for Saccharomyces cerevisiae.</title>
        <authorList>
            <person name="Hu Y."/>
            <person name="Rolfs A."/>
            <person name="Bhullar B."/>
            <person name="Murthy T.V.S."/>
            <person name="Zhu C."/>
            <person name="Berger M.F."/>
            <person name="Camargo A.A."/>
            <person name="Kelley F."/>
            <person name="McCarron S."/>
            <person name="Jepson D."/>
            <person name="Richardson A."/>
            <person name="Raphael J."/>
            <person name="Moreira D."/>
            <person name="Taycher E."/>
            <person name="Zuo D."/>
            <person name="Mohr S."/>
            <person name="Kane M.F."/>
            <person name="Williamson J."/>
            <person name="Simpson A.J.G."/>
            <person name="Bulyk M.L."/>
            <person name="Harlow E."/>
            <person name="Marsischky G."/>
            <person name="Kolodner R.D."/>
            <person name="LaBaer J."/>
        </authorList>
    </citation>
    <scope>NUCLEOTIDE SEQUENCE [GENOMIC DNA]</scope>
    <source>
        <strain>ATCC 204508 / S288c</strain>
    </source>
</reference>
<reference key="4">
    <citation type="journal article" date="2005" name="Nucleic Acids Res.">
        <title>Mapping of transcription start sites in Saccharomyces cerevisiae using 5' SAGE.</title>
        <authorList>
            <person name="Zhang Z."/>
            <person name="Dietrich F.S."/>
        </authorList>
    </citation>
    <scope>IDENTIFICATION OF PROBABLE INITIATION SITE</scope>
</reference>
<dbReference type="EC" id="6.3.1.20"/>
<dbReference type="EMBL" id="Z49321">
    <property type="protein sequence ID" value="CAA89337.1"/>
    <property type="status" value="ALT_INIT"/>
    <property type="molecule type" value="Genomic_DNA"/>
</dbReference>
<dbReference type="EMBL" id="AY558080">
    <property type="protein sequence ID" value="AAS56406.1"/>
    <property type="status" value="ALT_INIT"/>
    <property type="molecule type" value="Genomic_DNA"/>
</dbReference>
<dbReference type="EMBL" id="BK006943">
    <property type="protein sequence ID" value="DAA08754.1"/>
    <property type="molecule type" value="Genomic_DNA"/>
</dbReference>
<dbReference type="PIR" id="S56818">
    <property type="entry name" value="S56818"/>
</dbReference>
<dbReference type="RefSeq" id="NP_012489.2">
    <property type="nucleotide sequence ID" value="NM_001181479.1"/>
</dbReference>
<dbReference type="SMR" id="P47051"/>
<dbReference type="BioGRID" id="33709">
    <property type="interactions" value="346"/>
</dbReference>
<dbReference type="FunCoup" id="P47051">
    <property type="interactions" value="313"/>
</dbReference>
<dbReference type="MINT" id="P47051"/>
<dbReference type="STRING" id="4932.YJL046W"/>
<dbReference type="PaxDb" id="4932-YJL046W"/>
<dbReference type="PeptideAtlas" id="P47051"/>
<dbReference type="EnsemblFungi" id="YJL046W_mRNA">
    <property type="protein sequence ID" value="YJL046W"/>
    <property type="gene ID" value="YJL046W"/>
</dbReference>
<dbReference type="GeneID" id="853401"/>
<dbReference type="KEGG" id="sce:YJL046W"/>
<dbReference type="AGR" id="SGD:S000003582"/>
<dbReference type="SGD" id="S000003582">
    <property type="gene designation" value="AIM22"/>
</dbReference>
<dbReference type="VEuPathDB" id="FungiDB:YJL046W"/>
<dbReference type="eggNOG" id="KOG3159">
    <property type="taxonomic scope" value="Eukaryota"/>
</dbReference>
<dbReference type="GeneTree" id="ENSGT00390000008846"/>
<dbReference type="HOGENOM" id="CLU_022986_2_0_1"/>
<dbReference type="InParanoid" id="P47051"/>
<dbReference type="OMA" id="KCAVIGK"/>
<dbReference type="OrthoDB" id="201621at2759"/>
<dbReference type="BioCyc" id="MetaCyc:G3O-31510-MONOMER"/>
<dbReference type="BioCyc" id="YEAST:G3O-31510-MONOMER"/>
<dbReference type="Reactome" id="R-SCE-9857492">
    <property type="pathway name" value="Protein lipoylation"/>
</dbReference>
<dbReference type="UniPathway" id="UPA00537">
    <property type="reaction ID" value="UER00594"/>
</dbReference>
<dbReference type="UniPathway" id="UPA00537">
    <property type="reaction ID" value="UER00595"/>
</dbReference>
<dbReference type="BioGRID-ORCS" id="853401">
    <property type="hits" value="0 hits in 10 CRISPR screens"/>
</dbReference>
<dbReference type="PRO" id="PR:P47051"/>
<dbReference type="Proteomes" id="UP000002311">
    <property type="component" value="Chromosome X"/>
</dbReference>
<dbReference type="RNAct" id="P47051">
    <property type="molecule type" value="protein"/>
</dbReference>
<dbReference type="GO" id="GO:0005737">
    <property type="term" value="C:cytoplasm"/>
    <property type="evidence" value="ECO:0000318"/>
    <property type="project" value="GO_Central"/>
</dbReference>
<dbReference type="GO" id="GO:0005739">
    <property type="term" value="C:mitochondrion"/>
    <property type="evidence" value="ECO:0000314"/>
    <property type="project" value="SGD"/>
</dbReference>
<dbReference type="GO" id="GO:0005524">
    <property type="term" value="F:ATP binding"/>
    <property type="evidence" value="ECO:0007669"/>
    <property type="project" value="UniProtKB-KW"/>
</dbReference>
<dbReference type="GO" id="GO:0016979">
    <property type="term" value="F:lipoate-protein ligase activity"/>
    <property type="evidence" value="ECO:0000247"/>
    <property type="project" value="SGD"/>
</dbReference>
<dbReference type="GO" id="GO:0017118">
    <property type="term" value="F:lipoyltransferase activity"/>
    <property type="evidence" value="ECO:0000318"/>
    <property type="project" value="GO_Central"/>
</dbReference>
<dbReference type="GO" id="GO:0036211">
    <property type="term" value="P:protein modification process"/>
    <property type="evidence" value="ECO:0007669"/>
    <property type="project" value="InterPro"/>
</dbReference>
<dbReference type="CDD" id="cd16443">
    <property type="entry name" value="LplA"/>
    <property type="match status" value="1"/>
</dbReference>
<dbReference type="FunFam" id="3.30.930.10:FF:000107">
    <property type="entry name" value="Putative lipoate-protein ligase A"/>
    <property type="match status" value="1"/>
</dbReference>
<dbReference type="Gene3D" id="3.30.930.10">
    <property type="entry name" value="Bira Bifunctional Protein, Domain 2"/>
    <property type="match status" value="1"/>
</dbReference>
<dbReference type="InterPro" id="IPR045864">
    <property type="entry name" value="aa-tRNA-synth_II/BPL/LPL"/>
</dbReference>
<dbReference type="InterPro" id="IPR004143">
    <property type="entry name" value="BPL_LPL_catalytic"/>
</dbReference>
<dbReference type="InterPro" id="IPR004562">
    <property type="entry name" value="LipoylTrfase_LipoateP_Ligase"/>
</dbReference>
<dbReference type="NCBIfam" id="TIGR00545">
    <property type="entry name" value="lipoyltrans"/>
    <property type="match status" value="1"/>
</dbReference>
<dbReference type="PANTHER" id="PTHR12561">
    <property type="entry name" value="LIPOATE-PROTEIN LIGASE"/>
    <property type="match status" value="1"/>
</dbReference>
<dbReference type="PANTHER" id="PTHR12561:SF3">
    <property type="entry name" value="LIPOYLTRANSFERASE 1, MITOCHONDRIAL"/>
    <property type="match status" value="1"/>
</dbReference>
<dbReference type="Pfam" id="PF21948">
    <property type="entry name" value="LplA-B_cat"/>
    <property type="match status" value="1"/>
</dbReference>
<dbReference type="SUPFAM" id="SSF55681">
    <property type="entry name" value="Class II aaRS and biotin synthetases"/>
    <property type="match status" value="1"/>
</dbReference>
<dbReference type="PROSITE" id="PS51733">
    <property type="entry name" value="BPL_LPL_CATALYTIC"/>
    <property type="match status" value="1"/>
</dbReference>
<name>LPLA_YEAST</name>
<protein>
    <recommendedName>
        <fullName>Putative lipoate-protein ligase A</fullName>
        <ecNumber>6.3.1.20</ecNumber>
    </recommendedName>
    <alternativeName>
        <fullName>Altered inheritance rate of mitochondria protein 22</fullName>
    </alternativeName>
</protein>
<accession>P47051</accession>
<accession>D6VWD8</accession>
<keyword id="KW-0067">ATP-binding</keyword>
<keyword id="KW-0436">Ligase</keyword>
<keyword id="KW-0547">Nucleotide-binding</keyword>
<keyword id="KW-1185">Reference proteome</keyword>
<comment type="function">
    <text evidence="1">Catalyzes both the ATP-dependent activation of exogenously supplied lipoate to lipoyl-AMP and the transfer of the activated lipoyl onto the lipoyl domains of lipoate-dependent enzymes.</text>
</comment>
<comment type="catalytic activity">
    <reaction>
        <text>L-lysyl-[lipoyl-carrier protein] + (R)-lipoate + ATP = N(6)-[(R)-lipoyl]-L-lysyl-[lipoyl-carrier protein] + AMP + diphosphate + H(+)</text>
        <dbReference type="Rhea" id="RHEA:49288"/>
        <dbReference type="Rhea" id="RHEA-COMP:10500"/>
        <dbReference type="Rhea" id="RHEA-COMP:10502"/>
        <dbReference type="ChEBI" id="CHEBI:15378"/>
        <dbReference type="ChEBI" id="CHEBI:29969"/>
        <dbReference type="ChEBI" id="CHEBI:30616"/>
        <dbReference type="ChEBI" id="CHEBI:33019"/>
        <dbReference type="ChEBI" id="CHEBI:83088"/>
        <dbReference type="ChEBI" id="CHEBI:83099"/>
        <dbReference type="ChEBI" id="CHEBI:456215"/>
        <dbReference type="EC" id="6.3.1.20"/>
    </reaction>
</comment>
<comment type="pathway">
    <text>Protein modification; protein lipoylation via exogenous pathway; protein N(6)-(lipoyl)lysine from lipoate: step 1/2.</text>
</comment>
<comment type="pathway">
    <text>Protein modification; protein lipoylation via exogenous pathway; protein N(6)-(lipoyl)lysine from lipoate: step 2/2.</text>
</comment>
<comment type="subunit">
    <text evidence="1">Monomer.</text>
</comment>
<comment type="miscellaneous">
    <text evidence="1">In the transfer reaction, the free carboxyl group of lipoic acid is attached via an amide linkage to the epsilon-amino group of a specific lysine residue of lipoyl domains of lipoate-dependent enzymes.</text>
</comment>
<comment type="similarity">
    <text evidence="3">Belongs to the LplA family.</text>
</comment>
<comment type="sequence caution" evidence="3">
    <conflict type="erroneous initiation">
        <sequence resource="EMBL-CDS" id="AAS56406"/>
    </conflict>
</comment>
<comment type="sequence caution" evidence="3">
    <conflict type="erroneous initiation">
        <sequence resource="EMBL-CDS" id="CAA89337"/>
    </conflict>
</comment>
<organism>
    <name type="scientific">Saccharomyces cerevisiae (strain ATCC 204508 / S288c)</name>
    <name type="common">Baker's yeast</name>
    <dbReference type="NCBI Taxonomy" id="559292"/>
    <lineage>
        <taxon>Eukaryota</taxon>
        <taxon>Fungi</taxon>
        <taxon>Dikarya</taxon>
        <taxon>Ascomycota</taxon>
        <taxon>Saccharomycotina</taxon>
        <taxon>Saccharomycetes</taxon>
        <taxon>Saccharomycetales</taxon>
        <taxon>Saccharomycetaceae</taxon>
        <taxon>Saccharomyces</taxon>
    </lineage>
</organism>
<sequence length="409" mass="47003">MSMMLSNWALSPRYVGQRNLIHCTTLFHTLTRWAKDADDKYHDINSMYENMFTPSNDNVSILQDEGKSDYDTTKASSMEEDISAFNKDLYNFYNIGYAKQIMSASQLENIVKAKGRFVIQSLSTSPYYNLALENYVFKNTPRAKRGPDNCRLLFYINDRCAVIGKNQNLWQEVDLAKLKSKNFELLRRFSGGGTVLHDLGNVNYSYLTSREKFETKFFNKMIIKWLNSLNPELRLDLNERGDIIQDGFKISGSAYKIAGGKAYHHATMLLNADLEQFSGLLEPSLPNNMEWESSGVHSVKSKIKNVGIITPNQFIAVVSERFQKTFKVDGEIPIYYCDEFKSINDEIKDAMNTLQSEQWKYFSGPKFSVKIKDKGLTIKVEKGMIYDCDRNDLIGLEFKGFLENIDSYT</sequence>